<proteinExistence type="inferred from homology"/>
<evidence type="ECO:0000255" key="1">
    <source>
        <dbReference type="HAMAP-Rule" id="MF_01279"/>
    </source>
</evidence>
<name>PEPQ_KLEP3</name>
<dbReference type="EC" id="3.4.13.9" evidence="1"/>
<dbReference type="EMBL" id="CP000964">
    <property type="protein sequence ID" value="ACI09188.1"/>
    <property type="molecule type" value="Genomic_DNA"/>
</dbReference>
<dbReference type="SMR" id="B5XYG9"/>
<dbReference type="MEROPS" id="M24.003"/>
<dbReference type="KEGG" id="kpe:KPK_5332"/>
<dbReference type="HOGENOM" id="CLU_050675_0_0_6"/>
<dbReference type="Proteomes" id="UP000001734">
    <property type="component" value="Chromosome"/>
</dbReference>
<dbReference type="GO" id="GO:0005829">
    <property type="term" value="C:cytosol"/>
    <property type="evidence" value="ECO:0007669"/>
    <property type="project" value="TreeGrafter"/>
</dbReference>
<dbReference type="GO" id="GO:0004177">
    <property type="term" value="F:aminopeptidase activity"/>
    <property type="evidence" value="ECO:0007669"/>
    <property type="project" value="TreeGrafter"/>
</dbReference>
<dbReference type="GO" id="GO:0046872">
    <property type="term" value="F:metal ion binding"/>
    <property type="evidence" value="ECO:0007669"/>
    <property type="project" value="UniProtKB-KW"/>
</dbReference>
<dbReference type="GO" id="GO:0008235">
    <property type="term" value="F:metalloexopeptidase activity"/>
    <property type="evidence" value="ECO:0007669"/>
    <property type="project" value="UniProtKB-UniRule"/>
</dbReference>
<dbReference type="GO" id="GO:0016795">
    <property type="term" value="F:phosphoric triester hydrolase activity"/>
    <property type="evidence" value="ECO:0007669"/>
    <property type="project" value="InterPro"/>
</dbReference>
<dbReference type="GO" id="GO:0102009">
    <property type="term" value="F:proline dipeptidase activity"/>
    <property type="evidence" value="ECO:0007669"/>
    <property type="project" value="UniProtKB-EC"/>
</dbReference>
<dbReference type="GO" id="GO:0006508">
    <property type="term" value="P:proteolysis"/>
    <property type="evidence" value="ECO:0007669"/>
    <property type="project" value="UniProtKB-KW"/>
</dbReference>
<dbReference type="CDD" id="cd01087">
    <property type="entry name" value="Prolidase"/>
    <property type="match status" value="1"/>
</dbReference>
<dbReference type="FunFam" id="3.40.350.10:FF:000002">
    <property type="entry name" value="Xaa-Pro dipeptidase"/>
    <property type="match status" value="1"/>
</dbReference>
<dbReference type="FunFam" id="3.90.230.10:FF:000006">
    <property type="entry name" value="Xaa-Pro dipeptidase"/>
    <property type="match status" value="1"/>
</dbReference>
<dbReference type="Gene3D" id="3.90.230.10">
    <property type="entry name" value="Creatinase/methionine aminopeptidase superfamily"/>
    <property type="match status" value="1"/>
</dbReference>
<dbReference type="Gene3D" id="3.40.350.10">
    <property type="entry name" value="Creatinase/prolidase N-terminal domain"/>
    <property type="match status" value="1"/>
</dbReference>
<dbReference type="HAMAP" id="MF_01279">
    <property type="entry name" value="X_Pro_dipeptid"/>
    <property type="match status" value="1"/>
</dbReference>
<dbReference type="InterPro" id="IPR029149">
    <property type="entry name" value="Creatin/AminoP/Spt16_N"/>
</dbReference>
<dbReference type="InterPro" id="IPR036005">
    <property type="entry name" value="Creatinase/aminopeptidase-like"/>
</dbReference>
<dbReference type="InterPro" id="IPR048819">
    <property type="entry name" value="PepQ_N"/>
</dbReference>
<dbReference type="InterPro" id="IPR000994">
    <property type="entry name" value="Pept_M24"/>
</dbReference>
<dbReference type="InterPro" id="IPR001131">
    <property type="entry name" value="Peptidase_M24B_aminopep-P_CS"/>
</dbReference>
<dbReference type="InterPro" id="IPR052433">
    <property type="entry name" value="X-Pro_dipept-like"/>
</dbReference>
<dbReference type="InterPro" id="IPR022846">
    <property type="entry name" value="X_Pro_dipept"/>
</dbReference>
<dbReference type="NCBIfam" id="NF010133">
    <property type="entry name" value="PRK13607.1"/>
    <property type="match status" value="1"/>
</dbReference>
<dbReference type="PANTHER" id="PTHR43226">
    <property type="entry name" value="XAA-PRO AMINOPEPTIDASE 3"/>
    <property type="match status" value="1"/>
</dbReference>
<dbReference type="PANTHER" id="PTHR43226:SF8">
    <property type="entry name" value="XAA-PRO DIPEPTIDASE"/>
    <property type="match status" value="1"/>
</dbReference>
<dbReference type="Pfam" id="PF21216">
    <property type="entry name" value="PepQ_N"/>
    <property type="match status" value="1"/>
</dbReference>
<dbReference type="Pfam" id="PF00557">
    <property type="entry name" value="Peptidase_M24"/>
    <property type="match status" value="1"/>
</dbReference>
<dbReference type="SUPFAM" id="SSF55920">
    <property type="entry name" value="Creatinase/aminopeptidase"/>
    <property type="match status" value="1"/>
</dbReference>
<dbReference type="PROSITE" id="PS00491">
    <property type="entry name" value="PROLINE_PEPTIDASE"/>
    <property type="match status" value="1"/>
</dbReference>
<reference key="1">
    <citation type="journal article" date="2008" name="PLoS Genet.">
        <title>Complete genome sequence of the N2-fixing broad host range endophyte Klebsiella pneumoniae 342 and virulence predictions verified in mice.</title>
        <authorList>
            <person name="Fouts D.E."/>
            <person name="Tyler H.L."/>
            <person name="DeBoy R.T."/>
            <person name="Daugherty S."/>
            <person name="Ren Q."/>
            <person name="Badger J.H."/>
            <person name="Durkin A.S."/>
            <person name="Huot H."/>
            <person name="Shrivastava S."/>
            <person name="Kothari S."/>
            <person name="Dodson R.J."/>
            <person name="Mohamoud Y."/>
            <person name="Khouri H."/>
            <person name="Roesch L.F.W."/>
            <person name="Krogfelt K.A."/>
            <person name="Struve C."/>
            <person name="Triplett E.W."/>
            <person name="Methe B.A."/>
        </authorList>
    </citation>
    <scope>NUCLEOTIDE SEQUENCE [LARGE SCALE GENOMIC DNA]</scope>
    <source>
        <strain>342</strain>
    </source>
</reference>
<accession>B5XYG9</accession>
<gene>
    <name evidence="1" type="primary">pepQ</name>
    <name type="ordered locus">KPK_5332</name>
</gene>
<organism>
    <name type="scientific">Klebsiella pneumoniae (strain 342)</name>
    <dbReference type="NCBI Taxonomy" id="507522"/>
    <lineage>
        <taxon>Bacteria</taxon>
        <taxon>Pseudomonadati</taxon>
        <taxon>Pseudomonadota</taxon>
        <taxon>Gammaproteobacteria</taxon>
        <taxon>Enterobacterales</taxon>
        <taxon>Enterobacteriaceae</taxon>
        <taxon>Klebsiella/Raoultella group</taxon>
        <taxon>Klebsiella</taxon>
        <taxon>Klebsiella pneumoniae complex</taxon>
    </lineage>
</organism>
<feature type="chain" id="PRO_1000140321" description="Xaa-Pro dipeptidase">
    <location>
        <begin position="1"/>
        <end position="443"/>
    </location>
</feature>
<feature type="binding site" evidence="1">
    <location>
        <position position="246"/>
    </location>
    <ligand>
        <name>Mn(2+)</name>
        <dbReference type="ChEBI" id="CHEBI:29035"/>
        <label>2</label>
    </ligand>
</feature>
<feature type="binding site" evidence="1">
    <location>
        <position position="257"/>
    </location>
    <ligand>
        <name>Mn(2+)</name>
        <dbReference type="ChEBI" id="CHEBI:29035"/>
        <label>1</label>
    </ligand>
</feature>
<feature type="binding site" evidence="1">
    <location>
        <position position="257"/>
    </location>
    <ligand>
        <name>Mn(2+)</name>
        <dbReference type="ChEBI" id="CHEBI:29035"/>
        <label>2</label>
    </ligand>
</feature>
<feature type="binding site" evidence="1">
    <location>
        <position position="339"/>
    </location>
    <ligand>
        <name>Mn(2+)</name>
        <dbReference type="ChEBI" id="CHEBI:29035"/>
        <label>1</label>
    </ligand>
</feature>
<feature type="binding site" evidence="1">
    <location>
        <position position="384"/>
    </location>
    <ligand>
        <name>Mn(2+)</name>
        <dbReference type="ChEBI" id="CHEBI:29035"/>
        <label>1</label>
    </ligand>
</feature>
<feature type="binding site" evidence="1">
    <location>
        <position position="423"/>
    </location>
    <ligand>
        <name>Mn(2+)</name>
        <dbReference type="ChEBI" id="CHEBI:29035"/>
        <label>1</label>
    </ligand>
</feature>
<feature type="binding site" evidence="1">
    <location>
        <position position="423"/>
    </location>
    <ligand>
        <name>Mn(2+)</name>
        <dbReference type="ChEBI" id="CHEBI:29035"/>
        <label>2</label>
    </ligand>
</feature>
<comment type="function">
    <text evidence="1">Splits dipeptides with a prolyl residue in the C-terminal position.</text>
</comment>
<comment type="catalytic activity">
    <reaction evidence="1">
        <text>Xaa-L-Pro dipeptide + H2O = an L-alpha-amino acid + L-proline</text>
        <dbReference type="Rhea" id="RHEA:76407"/>
        <dbReference type="ChEBI" id="CHEBI:15377"/>
        <dbReference type="ChEBI" id="CHEBI:59869"/>
        <dbReference type="ChEBI" id="CHEBI:60039"/>
        <dbReference type="ChEBI" id="CHEBI:195196"/>
        <dbReference type="EC" id="3.4.13.9"/>
    </reaction>
</comment>
<comment type="cofactor">
    <cofactor evidence="1">
        <name>Mn(2+)</name>
        <dbReference type="ChEBI" id="CHEBI:29035"/>
    </cofactor>
    <text evidence="1">Binds 2 manganese ions per subunit.</text>
</comment>
<comment type="similarity">
    <text evidence="1">Belongs to the peptidase M24B family. Bacterial-type prolidase subfamily.</text>
</comment>
<protein>
    <recommendedName>
        <fullName evidence="1">Xaa-Pro dipeptidase</fullName>
        <shortName evidence="1">X-Pro dipeptidase</shortName>
        <ecNumber evidence="1">3.4.13.9</ecNumber>
    </recommendedName>
    <alternativeName>
        <fullName evidence="1">Imidodipeptidase</fullName>
    </alternativeName>
    <alternativeName>
        <fullName evidence="1">Proline dipeptidase</fullName>
        <shortName evidence="1">Prolidase</shortName>
    </alternativeName>
</protein>
<sequence>MESLSALYKNHIVTLQERTRDVLARFQMDALLIHSGELVNVFLDDHPYPFKVNPQFKAWVPVTQVPNCWLLVDGVNKPKLWFYLPVDYWHNVEPLPTAFWTEEVDVIALPKADGIGSQLPAARGNIGYIGPVPERALGLGIAADKINPKGVIDYLHYYRAYKTDYELACMREAQKSAVNGHRAAYEAFQSGMSEFDINQAYLTATGHRDTDVPYSNIVALNEHASVLHYTKLDHRAPAEMRSFLLDAGAEYNGYAADLTRTWAAHGDNDFAHLIKDVNDEQLALISTMKAGTRYVDYHIQFHQRIAKLLRKHQLVTDMSEEAMVENDLTGPFMPHGIGHPLGLQVHDVAGFMQDDTGTHLAAPSKYPYLRCTRIIEPRMVLTIEPGIYFIESLLAPWREGPFSKHFNWQKIDAMKPFGGIRIEDNVVVHENSIENMTRDLKLA</sequence>
<keyword id="KW-0224">Dipeptidase</keyword>
<keyword id="KW-0378">Hydrolase</keyword>
<keyword id="KW-0464">Manganese</keyword>
<keyword id="KW-0479">Metal-binding</keyword>
<keyword id="KW-0482">Metalloprotease</keyword>
<keyword id="KW-0645">Protease</keyword>